<sequence>MPRRREVPKRVILPDPKYNDKTVAKLINILMVGGKKSVAESILYRALDIVESKSGEEAVKALKKCLDNIKPALEVKSRRVGGSTYQVPVEVRPDRRVSLAMRWLIKYSAARSEKTMTEKMAGEILDAFNSRGAAVKKREDTHKMAEANRAFAHYRW</sequence>
<gene>
    <name evidence="1" type="primary">rpsG</name>
    <name type="ordered locus">Glov_1342</name>
</gene>
<feature type="chain" id="PRO_1000125952" description="Small ribosomal subunit protein uS7">
    <location>
        <begin position="1"/>
        <end position="156"/>
    </location>
</feature>
<reference key="1">
    <citation type="submission" date="2008-05" db="EMBL/GenBank/DDBJ databases">
        <title>Complete sequence of chromosome of Geobacter lovleyi SZ.</title>
        <authorList>
            <consortium name="US DOE Joint Genome Institute"/>
            <person name="Lucas S."/>
            <person name="Copeland A."/>
            <person name="Lapidus A."/>
            <person name="Glavina del Rio T."/>
            <person name="Dalin E."/>
            <person name="Tice H."/>
            <person name="Bruce D."/>
            <person name="Goodwin L."/>
            <person name="Pitluck S."/>
            <person name="Chertkov O."/>
            <person name="Meincke L."/>
            <person name="Brettin T."/>
            <person name="Detter J.C."/>
            <person name="Han C."/>
            <person name="Tapia R."/>
            <person name="Kuske C.R."/>
            <person name="Schmutz J."/>
            <person name="Larimer F."/>
            <person name="Land M."/>
            <person name="Hauser L."/>
            <person name="Kyrpides N."/>
            <person name="Mikhailova N."/>
            <person name="Sung Y."/>
            <person name="Fletcher K.E."/>
            <person name="Ritalahti K.M."/>
            <person name="Loeffler F.E."/>
            <person name="Richardson P."/>
        </authorList>
    </citation>
    <scope>NUCLEOTIDE SEQUENCE [LARGE SCALE GENOMIC DNA]</scope>
    <source>
        <strain>ATCC BAA-1151 / DSM 17278 / SZ</strain>
    </source>
</reference>
<evidence type="ECO:0000255" key="1">
    <source>
        <dbReference type="HAMAP-Rule" id="MF_00480"/>
    </source>
</evidence>
<evidence type="ECO:0000305" key="2"/>
<proteinExistence type="inferred from homology"/>
<accession>B3E7T1</accession>
<comment type="function">
    <text evidence="1">One of the primary rRNA binding proteins, it binds directly to 16S rRNA where it nucleates assembly of the head domain of the 30S subunit. Is located at the subunit interface close to the decoding center, probably blocks exit of the E-site tRNA.</text>
</comment>
<comment type="subunit">
    <text evidence="1">Part of the 30S ribosomal subunit. Contacts proteins S9 and S11.</text>
</comment>
<comment type="similarity">
    <text evidence="1">Belongs to the universal ribosomal protein uS7 family.</text>
</comment>
<protein>
    <recommendedName>
        <fullName evidence="1">Small ribosomal subunit protein uS7</fullName>
    </recommendedName>
    <alternativeName>
        <fullName evidence="2">30S ribosomal protein S7</fullName>
    </alternativeName>
</protein>
<dbReference type="EMBL" id="CP001089">
    <property type="protein sequence ID" value="ACD95063.1"/>
    <property type="molecule type" value="Genomic_DNA"/>
</dbReference>
<dbReference type="RefSeq" id="WP_012469409.1">
    <property type="nucleotide sequence ID" value="NC_010814.1"/>
</dbReference>
<dbReference type="SMR" id="B3E7T1"/>
<dbReference type="STRING" id="398767.Glov_1342"/>
<dbReference type="KEGG" id="glo:Glov_1342"/>
<dbReference type="eggNOG" id="COG0049">
    <property type="taxonomic scope" value="Bacteria"/>
</dbReference>
<dbReference type="HOGENOM" id="CLU_072226_1_1_7"/>
<dbReference type="OrthoDB" id="9807653at2"/>
<dbReference type="Proteomes" id="UP000002420">
    <property type="component" value="Chromosome"/>
</dbReference>
<dbReference type="GO" id="GO:0015935">
    <property type="term" value="C:small ribosomal subunit"/>
    <property type="evidence" value="ECO:0007669"/>
    <property type="project" value="InterPro"/>
</dbReference>
<dbReference type="GO" id="GO:0019843">
    <property type="term" value="F:rRNA binding"/>
    <property type="evidence" value="ECO:0007669"/>
    <property type="project" value="UniProtKB-UniRule"/>
</dbReference>
<dbReference type="GO" id="GO:0003735">
    <property type="term" value="F:structural constituent of ribosome"/>
    <property type="evidence" value="ECO:0007669"/>
    <property type="project" value="InterPro"/>
</dbReference>
<dbReference type="GO" id="GO:0000049">
    <property type="term" value="F:tRNA binding"/>
    <property type="evidence" value="ECO:0007669"/>
    <property type="project" value="UniProtKB-UniRule"/>
</dbReference>
<dbReference type="GO" id="GO:0006412">
    <property type="term" value="P:translation"/>
    <property type="evidence" value="ECO:0007669"/>
    <property type="project" value="UniProtKB-UniRule"/>
</dbReference>
<dbReference type="CDD" id="cd14869">
    <property type="entry name" value="uS7_Bacteria"/>
    <property type="match status" value="1"/>
</dbReference>
<dbReference type="FunFam" id="1.10.455.10:FF:000001">
    <property type="entry name" value="30S ribosomal protein S7"/>
    <property type="match status" value="1"/>
</dbReference>
<dbReference type="Gene3D" id="1.10.455.10">
    <property type="entry name" value="Ribosomal protein S7 domain"/>
    <property type="match status" value="1"/>
</dbReference>
<dbReference type="HAMAP" id="MF_00480_B">
    <property type="entry name" value="Ribosomal_uS7_B"/>
    <property type="match status" value="1"/>
</dbReference>
<dbReference type="InterPro" id="IPR000235">
    <property type="entry name" value="Ribosomal_uS7"/>
</dbReference>
<dbReference type="InterPro" id="IPR005717">
    <property type="entry name" value="Ribosomal_uS7_bac/org-type"/>
</dbReference>
<dbReference type="InterPro" id="IPR020606">
    <property type="entry name" value="Ribosomal_uS7_CS"/>
</dbReference>
<dbReference type="InterPro" id="IPR023798">
    <property type="entry name" value="Ribosomal_uS7_dom"/>
</dbReference>
<dbReference type="InterPro" id="IPR036823">
    <property type="entry name" value="Ribosomal_uS7_dom_sf"/>
</dbReference>
<dbReference type="NCBIfam" id="TIGR01029">
    <property type="entry name" value="rpsG_bact"/>
    <property type="match status" value="1"/>
</dbReference>
<dbReference type="PANTHER" id="PTHR11205">
    <property type="entry name" value="RIBOSOMAL PROTEIN S7"/>
    <property type="match status" value="1"/>
</dbReference>
<dbReference type="Pfam" id="PF00177">
    <property type="entry name" value="Ribosomal_S7"/>
    <property type="match status" value="1"/>
</dbReference>
<dbReference type="PIRSF" id="PIRSF002122">
    <property type="entry name" value="RPS7p_RPS7a_RPS5e_RPS7o"/>
    <property type="match status" value="1"/>
</dbReference>
<dbReference type="SUPFAM" id="SSF47973">
    <property type="entry name" value="Ribosomal protein S7"/>
    <property type="match status" value="1"/>
</dbReference>
<dbReference type="PROSITE" id="PS00052">
    <property type="entry name" value="RIBOSOMAL_S7"/>
    <property type="match status" value="1"/>
</dbReference>
<name>RS7_TRIL1</name>
<keyword id="KW-1185">Reference proteome</keyword>
<keyword id="KW-0687">Ribonucleoprotein</keyword>
<keyword id="KW-0689">Ribosomal protein</keyword>
<keyword id="KW-0694">RNA-binding</keyword>
<keyword id="KW-0699">rRNA-binding</keyword>
<keyword id="KW-0820">tRNA-binding</keyword>
<organism>
    <name type="scientific">Trichlorobacter lovleyi (strain ATCC BAA-1151 / DSM 17278 / SZ)</name>
    <name type="common">Geobacter lovleyi</name>
    <dbReference type="NCBI Taxonomy" id="398767"/>
    <lineage>
        <taxon>Bacteria</taxon>
        <taxon>Pseudomonadati</taxon>
        <taxon>Thermodesulfobacteriota</taxon>
        <taxon>Desulfuromonadia</taxon>
        <taxon>Geobacterales</taxon>
        <taxon>Geobacteraceae</taxon>
        <taxon>Trichlorobacter</taxon>
    </lineage>
</organism>